<proteinExistence type="inferred from homology"/>
<reference key="1">
    <citation type="journal article" date="2006" name="Nat. Biotechnol.">
        <title>Complete genome sequence of the entomopathogenic and metabolically versatile soil bacterium Pseudomonas entomophila.</title>
        <authorList>
            <person name="Vodovar N."/>
            <person name="Vallenet D."/>
            <person name="Cruveiller S."/>
            <person name="Rouy Z."/>
            <person name="Barbe V."/>
            <person name="Acosta C."/>
            <person name="Cattolico L."/>
            <person name="Jubin C."/>
            <person name="Lajus A."/>
            <person name="Segurens B."/>
            <person name="Vacherie B."/>
            <person name="Wincker P."/>
            <person name="Weissenbach J."/>
            <person name="Lemaitre B."/>
            <person name="Medigue C."/>
            <person name="Boccard F."/>
        </authorList>
    </citation>
    <scope>NUCLEOTIDE SEQUENCE [LARGE SCALE GENOMIC DNA]</scope>
    <source>
        <strain>L48</strain>
    </source>
</reference>
<protein>
    <recommendedName>
        <fullName evidence="1">Ribosomal RNA small subunit methyltransferase H</fullName>
        <ecNumber evidence="1">2.1.1.199</ecNumber>
    </recommendedName>
    <alternativeName>
        <fullName evidence="1">16S rRNA m(4)C1402 methyltransferase</fullName>
    </alternativeName>
    <alternativeName>
        <fullName evidence="1">rRNA (cytosine-N(4)-)-methyltransferase RsmH</fullName>
    </alternativeName>
</protein>
<feature type="chain" id="PRO_0000387052" description="Ribosomal RNA small subunit methyltransferase H">
    <location>
        <begin position="1"/>
        <end position="315"/>
    </location>
</feature>
<feature type="binding site" evidence="1">
    <location>
        <begin position="37"/>
        <end position="39"/>
    </location>
    <ligand>
        <name>S-adenosyl-L-methionine</name>
        <dbReference type="ChEBI" id="CHEBI:59789"/>
    </ligand>
</feature>
<feature type="binding site" evidence="1">
    <location>
        <position position="57"/>
    </location>
    <ligand>
        <name>S-adenosyl-L-methionine</name>
        <dbReference type="ChEBI" id="CHEBI:59789"/>
    </ligand>
</feature>
<feature type="binding site" evidence="1">
    <location>
        <position position="83"/>
    </location>
    <ligand>
        <name>S-adenosyl-L-methionine</name>
        <dbReference type="ChEBI" id="CHEBI:59789"/>
    </ligand>
</feature>
<feature type="binding site" evidence="1">
    <location>
        <position position="105"/>
    </location>
    <ligand>
        <name>S-adenosyl-L-methionine</name>
        <dbReference type="ChEBI" id="CHEBI:59789"/>
    </ligand>
</feature>
<feature type="binding site" evidence="1">
    <location>
        <position position="112"/>
    </location>
    <ligand>
        <name>S-adenosyl-L-methionine</name>
        <dbReference type="ChEBI" id="CHEBI:59789"/>
    </ligand>
</feature>
<dbReference type="EC" id="2.1.1.199" evidence="1"/>
<dbReference type="EMBL" id="CT573326">
    <property type="protein sequence ID" value="CAK17175.1"/>
    <property type="molecule type" value="Genomic_DNA"/>
</dbReference>
<dbReference type="SMR" id="Q1I5B0"/>
<dbReference type="STRING" id="384676.PSEEN4493"/>
<dbReference type="KEGG" id="pen:PSEEN4493"/>
<dbReference type="eggNOG" id="COG0275">
    <property type="taxonomic scope" value="Bacteria"/>
</dbReference>
<dbReference type="HOGENOM" id="CLU_038422_2_0_6"/>
<dbReference type="OrthoDB" id="9806637at2"/>
<dbReference type="Proteomes" id="UP000000658">
    <property type="component" value="Chromosome"/>
</dbReference>
<dbReference type="GO" id="GO:0005737">
    <property type="term" value="C:cytoplasm"/>
    <property type="evidence" value="ECO:0007669"/>
    <property type="project" value="UniProtKB-SubCell"/>
</dbReference>
<dbReference type="GO" id="GO:0071424">
    <property type="term" value="F:rRNA (cytosine-N4-)-methyltransferase activity"/>
    <property type="evidence" value="ECO:0007669"/>
    <property type="project" value="UniProtKB-UniRule"/>
</dbReference>
<dbReference type="GO" id="GO:0070475">
    <property type="term" value="P:rRNA base methylation"/>
    <property type="evidence" value="ECO:0007669"/>
    <property type="project" value="UniProtKB-UniRule"/>
</dbReference>
<dbReference type="FunFam" id="1.10.150.170:FF:000003">
    <property type="entry name" value="Ribosomal RNA small subunit methyltransferase H"/>
    <property type="match status" value="1"/>
</dbReference>
<dbReference type="Gene3D" id="1.10.150.170">
    <property type="entry name" value="Putative methyltransferase TM0872, insert domain"/>
    <property type="match status" value="1"/>
</dbReference>
<dbReference type="Gene3D" id="3.40.50.150">
    <property type="entry name" value="Vaccinia Virus protein VP39"/>
    <property type="match status" value="1"/>
</dbReference>
<dbReference type="HAMAP" id="MF_01007">
    <property type="entry name" value="16SrRNA_methyltr_H"/>
    <property type="match status" value="1"/>
</dbReference>
<dbReference type="InterPro" id="IPR002903">
    <property type="entry name" value="RsmH"/>
</dbReference>
<dbReference type="InterPro" id="IPR023397">
    <property type="entry name" value="SAM-dep_MeTrfase_MraW_recog"/>
</dbReference>
<dbReference type="InterPro" id="IPR029063">
    <property type="entry name" value="SAM-dependent_MTases_sf"/>
</dbReference>
<dbReference type="NCBIfam" id="TIGR00006">
    <property type="entry name" value="16S rRNA (cytosine(1402)-N(4))-methyltransferase RsmH"/>
    <property type="match status" value="1"/>
</dbReference>
<dbReference type="PANTHER" id="PTHR11265:SF0">
    <property type="entry name" value="12S RRNA N4-METHYLCYTIDINE METHYLTRANSFERASE"/>
    <property type="match status" value="1"/>
</dbReference>
<dbReference type="PANTHER" id="PTHR11265">
    <property type="entry name" value="S-ADENOSYL-METHYLTRANSFERASE MRAW"/>
    <property type="match status" value="1"/>
</dbReference>
<dbReference type="Pfam" id="PF01795">
    <property type="entry name" value="Methyltransf_5"/>
    <property type="match status" value="1"/>
</dbReference>
<dbReference type="PIRSF" id="PIRSF004486">
    <property type="entry name" value="MraW"/>
    <property type="match status" value="1"/>
</dbReference>
<dbReference type="SUPFAM" id="SSF81799">
    <property type="entry name" value="Putative methyltransferase TM0872, insert domain"/>
    <property type="match status" value="1"/>
</dbReference>
<dbReference type="SUPFAM" id="SSF53335">
    <property type="entry name" value="S-adenosyl-L-methionine-dependent methyltransferases"/>
    <property type="match status" value="1"/>
</dbReference>
<evidence type="ECO:0000255" key="1">
    <source>
        <dbReference type="HAMAP-Rule" id="MF_01007"/>
    </source>
</evidence>
<name>RSMH_PSEE4</name>
<gene>
    <name evidence="1" type="primary">rsmH</name>
    <name type="synonym">mraW</name>
    <name type="ordered locus">PSEEN4493</name>
</gene>
<accession>Q1I5B0</accession>
<organism>
    <name type="scientific">Pseudomonas entomophila (strain L48)</name>
    <dbReference type="NCBI Taxonomy" id="384676"/>
    <lineage>
        <taxon>Bacteria</taxon>
        <taxon>Pseudomonadati</taxon>
        <taxon>Pseudomonadota</taxon>
        <taxon>Gammaproteobacteria</taxon>
        <taxon>Pseudomonadales</taxon>
        <taxon>Pseudomonadaceae</taxon>
        <taxon>Pseudomonas</taxon>
    </lineage>
</organism>
<comment type="function">
    <text evidence="1">Specifically methylates the N4 position of cytidine in position 1402 (C1402) of 16S rRNA.</text>
</comment>
<comment type="catalytic activity">
    <reaction evidence="1">
        <text>cytidine(1402) in 16S rRNA + S-adenosyl-L-methionine = N(4)-methylcytidine(1402) in 16S rRNA + S-adenosyl-L-homocysteine + H(+)</text>
        <dbReference type="Rhea" id="RHEA:42928"/>
        <dbReference type="Rhea" id="RHEA-COMP:10286"/>
        <dbReference type="Rhea" id="RHEA-COMP:10287"/>
        <dbReference type="ChEBI" id="CHEBI:15378"/>
        <dbReference type="ChEBI" id="CHEBI:57856"/>
        <dbReference type="ChEBI" id="CHEBI:59789"/>
        <dbReference type="ChEBI" id="CHEBI:74506"/>
        <dbReference type="ChEBI" id="CHEBI:82748"/>
        <dbReference type="EC" id="2.1.1.199"/>
    </reaction>
</comment>
<comment type="subcellular location">
    <subcellularLocation>
        <location evidence="1">Cytoplasm</location>
    </subcellularLocation>
</comment>
<comment type="similarity">
    <text evidence="1">Belongs to the methyltransferase superfamily. RsmH family.</text>
</comment>
<keyword id="KW-0963">Cytoplasm</keyword>
<keyword id="KW-0489">Methyltransferase</keyword>
<keyword id="KW-0698">rRNA processing</keyword>
<keyword id="KW-0949">S-adenosyl-L-methionine</keyword>
<keyword id="KW-0808">Transferase</keyword>
<sequence length="315" mass="34379">MTIDSGFNHITVLLDEAVEALALRADGCYLDGTFGRGGHSRLILSKLGPQGRLLGFDKDPQAIATGQALAAEDGRFVIVQRSFAELGAEVAGRDLAGKVSGILLDLGVSSPQLDDPERGFSFLNDGPLDMRMNPNQGISAAEFIATAPVEEIARVFKEYGEERFAGRMARAVVERREKQPFTRTADLAEVLKVANPAWEKGKNPATRAFQGLRIHVNNELGDLETGLEAALDALEVGGRLAVISFHSLEDRIVKLFMRKLVKGEADNLPRNLPVQHKTFEPRIKLIGKAQFASEAELKANPRSRSAVMRVAEKLR</sequence>